<feature type="chain" id="PRO_0000353497" description="DNA-directed RNA polymerase subunit beta'">
    <location>
        <begin position="1"/>
        <end position="680"/>
    </location>
</feature>
<feature type="binding site" evidence="1">
    <location>
        <position position="69"/>
    </location>
    <ligand>
        <name>Zn(2+)</name>
        <dbReference type="ChEBI" id="CHEBI:29105"/>
    </ligand>
</feature>
<feature type="binding site" evidence="1">
    <location>
        <position position="71"/>
    </location>
    <ligand>
        <name>Zn(2+)</name>
        <dbReference type="ChEBI" id="CHEBI:29105"/>
    </ligand>
</feature>
<feature type="binding site" evidence="1">
    <location>
        <position position="87"/>
    </location>
    <ligand>
        <name>Zn(2+)</name>
        <dbReference type="ChEBI" id="CHEBI:29105"/>
    </ligand>
</feature>
<feature type="binding site" evidence="1">
    <location>
        <position position="90"/>
    </location>
    <ligand>
        <name>Zn(2+)</name>
        <dbReference type="ChEBI" id="CHEBI:29105"/>
    </ligand>
</feature>
<feature type="binding site" evidence="1">
    <location>
        <position position="489"/>
    </location>
    <ligand>
        <name>Mg(2+)</name>
        <dbReference type="ChEBI" id="CHEBI:18420"/>
    </ligand>
</feature>
<feature type="binding site" evidence="1">
    <location>
        <position position="491"/>
    </location>
    <ligand>
        <name>Mg(2+)</name>
        <dbReference type="ChEBI" id="CHEBI:18420"/>
    </ligand>
</feature>
<feature type="binding site" evidence="1">
    <location>
        <position position="493"/>
    </location>
    <ligand>
        <name>Mg(2+)</name>
        <dbReference type="ChEBI" id="CHEBI:18420"/>
    </ligand>
</feature>
<gene>
    <name evidence="1" type="primary">rpoC1</name>
</gene>
<evidence type="ECO:0000255" key="1">
    <source>
        <dbReference type="HAMAP-Rule" id="MF_01323"/>
    </source>
</evidence>
<name>RPOC1_LOBMA</name>
<comment type="function">
    <text evidence="1">DNA-dependent RNA polymerase catalyzes the transcription of DNA into RNA using the four ribonucleoside triphosphates as substrates.</text>
</comment>
<comment type="catalytic activity">
    <reaction evidence="1">
        <text>RNA(n) + a ribonucleoside 5'-triphosphate = RNA(n+1) + diphosphate</text>
        <dbReference type="Rhea" id="RHEA:21248"/>
        <dbReference type="Rhea" id="RHEA-COMP:14527"/>
        <dbReference type="Rhea" id="RHEA-COMP:17342"/>
        <dbReference type="ChEBI" id="CHEBI:33019"/>
        <dbReference type="ChEBI" id="CHEBI:61557"/>
        <dbReference type="ChEBI" id="CHEBI:140395"/>
        <dbReference type="EC" id="2.7.7.6"/>
    </reaction>
</comment>
<comment type="cofactor">
    <cofactor evidence="1">
        <name>Mg(2+)</name>
        <dbReference type="ChEBI" id="CHEBI:18420"/>
    </cofactor>
    <text evidence="1">Binds 1 Mg(2+) ion per subunit.</text>
</comment>
<comment type="cofactor">
    <cofactor evidence="1">
        <name>Zn(2+)</name>
        <dbReference type="ChEBI" id="CHEBI:29105"/>
    </cofactor>
    <text evidence="1">Binds 1 Zn(2+) ion per subunit.</text>
</comment>
<comment type="subunit">
    <text evidence="1">In plastids the minimal PEP RNA polymerase catalytic core is composed of four subunits: alpha, beta, beta', and beta''. When a (nuclear-encoded) sigma factor is associated with the core the holoenzyme is formed, which can initiate transcription.</text>
</comment>
<comment type="subcellular location">
    <subcellularLocation>
        <location evidence="1">Plastid</location>
        <location evidence="1">Chloroplast</location>
    </subcellularLocation>
</comment>
<comment type="similarity">
    <text evidence="1">Belongs to the RNA polymerase beta' chain family. RpoC1 subfamily.</text>
</comment>
<organism>
    <name type="scientific">Lobularia maritima</name>
    <name type="common">Sweet alyssum</name>
    <name type="synonym">Alyssum maritimum</name>
    <dbReference type="NCBI Taxonomy" id="226051"/>
    <lineage>
        <taxon>Eukaryota</taxon>
        <taxon>Viridiplantae</taxon>
        <taxon>Streptophyta</taxon>
        <taxon>Embryophyta</taxon>
        <taxon>Tracheophyta</taxon>
        <taxon>Spermatophyta</taxon>
        <taxon>Magnoliopsida</taxon>
        <taxon>eudicotyledons</taxon>
        <taxon>Gunneridae</taxon>
        <taxon>Pentapetalae</taxon>
        <taxon>rosids</taxon>
        <taxon>malvids</taxon>
        <taxon>Brassicales</taxon>
        <taxon>Brassicaceae</taxon>
        <taxon>Anastaticeae</taxon>
        <taxon>Lobularia</taxon>
    </lineage>
</organism>
<sequence length="680" mass="78601">MIDRYKHQQLRIGLVSPQQISAWATKKIPNGEIVGEVTKPYTFHYKTNKPEKDGLFCERIFGPIKSGICACGNYRVIGDEKEDPKFCEQCGVEFVDSRIRRYQMGYIKLTCPVTHVWYLKRLPSYIANLLDKPLKELEGLVYCDFSFARPITKKPTFLRLRGSFEYEIQSWKYSIPLFFTTQGFDIFRNREISTGAGAIREQLADLDLRIIIENSLVEWKQLGEEGPTGNEWEDRKIVRRKDFLVRRMELAKHFIRTNIEPEWMVLCLLPVLPPELRPIIQVEGGKLMSSDINELYRRVIYRNNTLTDLLTTSRSTPGELVMCQEKLVQEAVDTLLDNGIRGQPMRDGHNKVYKSFSDVIEGKEGRFRETLLGKRVDYSGRSVIVVGPSLSLHRCGLPREIAIELFQTFVIRGLIRQHLASNIGVAKSQIREKKPIVWEILQEVMQGHPVLLNRAPTLHRLGIQSFQPILVEGRTICLHPLVCKGFNADFDGDQMAVHVPLSLEAQAEARLLMFSHMNLLSPAIGDPISVPTQDMLIGLYVLTSGTRRGICANRYNPCNRKNYKNERIYETNYKYMKEPFFCNSYDAIGAYRQKRINLDSPLWLRWQLDQRVIASREVPIEVHYESFGNYHEIYAHYLIVRSVKKETFCIYIRTTAGHISFYREIEEAIQGFSQACSYDT</sequence>
<geneLocation type="chloroplast"/>
<dbReference type="EC" id="2.7.7.6" evidence="1"/>
<dbReference type="EMBL" id="AP009375">
    <property type="protein sequence ID" value="BAF50540.1"/>
    <property type="molecule type" value="Genomic_DNA"/>
</dbReference>
<dbReference type="RefSeq" id="YP_001123716.1">
    <property type="nucleotide sequence ID" value="NC_009274.1"/>
</dbReference>
<dbReference type="SMR" id="A4QLI5"/>
<dbReference type="GeneID" id="4964823"/>
<dbReference type="GO" id="GO:0009507">
    <property type="term" value="C:chloroplast"/>
    <property type="evidence" value="ECO:0007669"/>
    <property type="project" value="UniProtKB-SubCell"/>
</dbReference>
<dbReference type="GO" id="GO:0000428">
    <property type="term" value="C:DNA-directed RNA polymerase complex"/>
    <property type="evidence" value="ECO:0007669"/>
    <property type="project" value="UniProtKB-KW"/>
</dbReference>
<dbReference type="GO" id="GO:0005739">
    <property type="term" value="C:mitochondrion"/>
    <property type="evidence" value="ECO:0007669"/>
    <property type="project" value="GOC"/>
</dbReference>
<dbReference type="GO" id="GO:0003677">
    <property type="term" value="F:DNA binding"/>
    <property type="evidence" value="ECO:0007669"/>
    <property type="project" value="UniProtKB-UniRule"/>
</dbReference>
<dbReference type="GO" id="GO:0003899">
    <property type="term" value="F:DNA-directed RNA polymerase activity"/>
    <property type="evidence" value="ECO:0007669"/>
    <property type="project" value="UniProtKB-UniRule"/>
</dbReference>
<dbReference type="GO" id="GO:0000287">
    <property type="term" value="F:magnesium ion binding"/>
    <property type="evidence" value="ECO:0007669"/>
    <property type="project" value="UniProtKB-UniRule"/>
</dbReference>
<dbReference type="GO" id="GO:0008270">
    <property type="term" value="F:zinc ion binding"/>
    <property type="evidence" value="ECO:0007669"/>
    <property type="project" value="UniProtKB-UniRule"/>
</dbReference>
<dbReference type="GO" id="GO:0006351">
    <property type="term" value="P:DNA-templated transcription"/>
    <property type="evidence" value="ECO:0007669"/>
    <property type="project" value="UniProtKB-UniRule"/>
</dbReference>
<dbReference type="FunFam" id="1.10.40.90:FF:000002">
    <property type="entry name" value="DNA-directed RNA polymerase subunit"/>
    <property type="match status" value="1"/>
</dbReference>
<dbReference type="FunFam" id="4.10.860.120:FF:000007">
    <property type="entry name" value="DNA-directed RNA polymerase subunit gamma"/>
    <property type="match status" value="1"/>
</dbReference>
<dbReference type="Gene3D" id="1.10.40.90">
    <property type="match status" value="1"/>
</dbReference>
<dbReference type="Gene3D" id="2.40.40.20">
    <property type="match status" value="1"/>
</dbReference>
<dbReference type="Gene3D" id="4.10.860.120">
    <property type="entry name" value="RNA polymerase II, clamp domain"/>
    <property type="match status" value="1"/>
</dbReference>
<dbReference type="Gene3D" id="1.10.274.100">
    <property type="entry name" value="RNA polymerase Rpb1, domain 3"/>
    <property type="match status" value="1"/>
</dbReference>
<dbReference type="HAMAP" id="MF_01323">
    <property type="entry name" value="RNApol_bact_RpoC1"/>
    <property type="match status" value="1"/>
</dbReference>
<dbReference type="InterPro" id="IPR045867">
    <property type="entry name" value="DNA-dir_RpoC_beta_prime"/>
</dbReference>
<dbReference type="InterPro" id="IPR000722">
    <property type="entry name" value="RNA_pol_asu"/>
</dbReference>
<dbReference type="InterPro" id="IPR006592">
    <property type="entry name" value="RNA_pol_N"/>
</dbReference>
<dbReference type="InterPro" id="IPR007080">
    <property type="entry name" value="RNA_pol_Rpb1_1"/>
</dbReference>
<dbReference type="InterPro" id="IPR042102">
    <property type="entry name" value="RNA_pol_Rpb1_3_sf"/>
</dbReference>
<dbReference type="InterPro" id="IPR044893">
    <property type="entry name" value="RNA_pol_Rpb1_clamp_domain"/>
</dbReference>
<dbReference type="InterPro" id="IPR034678">
    <property type="entry name" value="RNApol_RpoC1"/>
</dbReference>
<dbReference type="PANTHER" id="PTHR19376">
    <property type="entry name" value="DNA-DIRECTED RNA POLYMERASE"/>
    <property type="match status" value="1"/>
</dbReference>
<dbReference type="PANTHER" id="PTHR19376:SF54">
    <property type="entry name" value="DNA-DIRECTED RNA POLYMERASE SUBUNIT BETA"/>
    <property type="match status" value="1"/>
</dbReference>
<dbReference type="Pfam" id="PF04997">
    <property type="entry name" value="RNA_pol_Rpb1_1"/>
    <property type="match status" value="1"/>
</dbReference>
<dbReference type="Pfam" id="PF00623">
    <property type="entry name" value="RNA_pol_Rpb1_2"/>
    <property type="match status" value="2"/>
</dbReference>
<dbReference type="SMART" id="SM00663">
    <property type="entry name" value="RPOLA_N"/>
    <property type="match status" value="1"/>
</dbReference>
<dbReference type="SUPFAM" id="SSF64484">
    <property type="entry name" value="beta and beta-prime subunits of DNA dependent RNA-polymerase"/>
    <property type="match status" value="1"/>
</dbReference>
<keyword id="KW-0150">Chloroplast</keyword>
<keyword id="KW-0240">DNA-directed RNA polymerase</keyword>
<keyword id="KW-0460">Magnesium</keyword>
<keyword id="KW-0479">Metal-binding</keyword>
<keyword id="KW-0548">Nucleotidyltransferase</keyword>
<keyword id="KW-0934">Plastid</keyword>
<keyword id="KW-0804">Transcription</keyword>
<keyword id="KW-0808">Transferase</keyword>
<keyword id="KW-0862">Zinc</keyword>
<protein>
    <recommendedName>
        <fullName evidence="1">DNA-directed RNA polymerase subunit beta'</fullName>
        <ecNumber evidence="1">2.7.7.6</ecNumber>
    </recommendedName>
    <alternativeName>
        <fullName evidence="1">PEP</fullName>
    </alternativeName>
    <alternativeName>
        <fullName evidence="1">Plastid-encoded RNA polymerase subunit beta'</fullName>
        <shortName evidence="1">RNA polymerase subunit beta'</shortName>
    </alternativeName>
</protein>
<proteinExistence type="inferred from homology"/>
<reference key="1">
    <citation type="submission" date="2007-03" db="EMBL/GenBank/DDBJ databases">
        <title>Sequencing analysis of Lobularia maritima chloroplast DNA.</title>
        <authorList>
            <person name="Hosouchi T."/>
            <person name="Tsuruoka H."/>
            <person name="Kotani H."/>
        </authorList>
    </citation>
    <scope>NUCLEOTIDE SEQUENCE [LARGE SCALE GENOMIC DNA]</scope>
</reference>
<accession>A4QLI5</accession>